<sequence>MAAKIRQNDEVIVLTGKDKGKRGKVTKVLPNGKVFVEGINIITKHEKPVPALGKAGGLVKKEAAIDASNVAIFNPKTNKADRVGFRFEDGKKVRFFKSNNEII</sequence>
<keyword id="KW-0687">Ribonucleoprotein</keyword>
<keyword id="KW-0689">Ribosomal protein</keyword>
<keyword id="KW-0694">RNA-binding</keyword>
<keyword id="KW-0699">rRNA-binding</keyword>
<organism>
    <name type="scientific">Haemophilus influenzae (strain 86-028NP)</name>
    <dbReference type="NCBI Taxonomy" id="281310"/>
    <lineage>
        <taxon>Bacteria</taxon>
        <taxon>Pseudomonadati</taxon>
        <taxon>Pseudomonadota</taxon>
        <taxon>Gammaproteobacteria</taxon>
        <taxon>Pasteurellales</taxon>
        <taxon>Pasteurellaceae</taxon>
        <taxon>Haemophilus</taxon>
    </lineage>
</organism>
<name>RL24_HAEI8</name>
<feature type="chain" id="PRO_0000241606" description="Large ribosomal subunit protein uL24">
    <location>
        <begin position="1"/>
        <end position="103"/>
    </location>
</feature>
<accession>Q4QMB0</accession>
<protein>
    <recommendedName>
        <fullName evidence="1">Large ribosomal subunit protein uL24</fullName>
    </recommendedName>
    <alternativeName>
        <fullName evidence="2">50S ribosomal protein L24</fullName>
    </alternativeName>
</protein>
<dbReference type="EMBL" id="CP000057">
    <property type="protein sequence ID" value="AAX87837.1"/>
    <property type="molecule type" value="Genomic_DNA"/>
</dbReference>
<dbReference type="RefSeq" id="WP_005635734.1">
    <property type="nucleotide sequence ID" value="NC_007146.2"/>
</dbReference>
<dbReference type="SMR" id="Q4QMB0"/>
<dbReference type="GeneID" id="93219829"/>
<dbReference type="KEGG" id="hit:NTHI0952"/>
<dbReference type="HOGENOM" id="CLU_093315_2_2_6"/>
<dbReference type="Proteomes" id="UP000002525">
    <property type="component" value="Chromosome"/>
</dbReference>
<dbReference type="GO" id="GO:1990904">
    <property type="term" value="C:ribonucleoprotein complex"/>
    <property type="evidence" value="ECO:0007669"/>
    <property type="project" value="UniProtKB-KW"/>
</dbReference>
<dbReference type="GO" id="GO:0005840">
    <property type="term" value="C:ribosome"/>
    <property type="evidence" value="ECO:0007669"/>
    <property type="project" value="UniProtKB-KW"/>
</dbReference>
<dbReference type="GO" id="GO:0019843">
    <property type="term" value="F:rRNA binding"/>
    <property type="evidence" value="ECO:0007669"/>
    <property type="project" value="UniProtKB-UniRule"/>
</dbReference>
<dbReference type="GO" id="GO:0003735">
    <property type="term" value="F:structural constituent of ribosome"/>
    <property type="evidence" value="ECO:0007669"/>
    <property type="project" value="InterPro"/>
</dbReference>
<dbReference type="GO" id="GO:0006412">
    <property type="term" value="P:translation"/>
    <property type="evidence" value="ECO:0007669"/>
    <property type="project" value="UniProtKB-UniRule"/>
</dbReference>
<dbReference type="CDD" id="cd06089">
    <property type="entry name" value="KOW_RPL26"/>
    <property type="match status" value="1"/>
</dbReference>
<dbReference type="FunFam" id="2.30.30.30:FF:000004">
    <property type="entry name" value="50S ribosomal protein L24"/>
    <property type="match status" value="1"/>
</dbReference>
<dbReference type="Gene3D" id="2.30.30.30">
    <property type="match status" value="1"/>
</dbReference>
<dbReference type="HAMAP" id="MF_01326_B">
    <property type="entry name" value="Ribosomal_uL24_B"/>
    <property type="match status" value="1"/>
</dbReference>
<dbReference type="InterPro" id="IPR005824">
    <property type="entry name" value="KOW"/>
</dbReference>
<dbReference type="InterPro" id="IPR014722">
    <property type="entry name" value="Rib_uL2_dom2"/>
</dbReference>
<dbReference type="InterPro" id="IPR003256">
    <property type="entry name" value="Ribosomal_uL24"/>
</dbReference>
<dbReference type="InterPro" id="IPR005825">
    <property type="entry name" value="Ribosomal_uL24_CS"/>
</dbReference>
<dbReference type="InterPro" id="IPR041988">
    <property type="entry name" value="Ribosomal_uL24_KOW"/>
</dbReference>
<dbReference type="InterPro" id="IPR008991">
    <property type="entry name" value="Translation_prot_SH3-like_sf"/>
</dbReference>
<dbReference type="NCBIfam" id="TIGR01079">
    <property type="entry name" value="rplX_bact"/>
    <property type="match status" value="1"/>
</dbReference>
<dbReference type="PANTHER" id="PTHR12903">
    <property type="entry name" value="MITOCHONDRIAL RIBOSOMAL PROTEIN L24"/>
    <property type="match status" value="1"/>
</dbReference>
<dbReference type="Pfam" id="PF00467">
    <property type="entry name" value="KOW"/>
    <property type="match status" value="1"/>
</dbReference>
<dbReference type="Pfam" id="PF17136">
    <property type="entry name" value="ribosomal_L24"/>
    <property type="match status" value="1"/>
</dbReference>
<dbReference type="SMART" id="SM00739">
    <property type="entry name" value="KOW"/>
    <property type="match status" value="1"/>
</dbReference>
<dbReference type="SUPFAM" id="SSF50104">
    <property type="entry name" value="Translation proteins SH3-like domain"/>
    <property type="match status" value="1"/>
</dbReference>
<dbReference type="PROSITE" id="PS01108">
    <property type="entry name" value="RIBOSOMAL_L24"/>
    <property type="match status" value="1"/>
</dbReference>
<reference key="1">
    <citation type="journal article" date="2005" name="J. Bacteriol.">
        <title>Genomic sequence of an otitis media isolate of nontypeable Haemophilus influenzae: comparative study with H. influenzae serotype d, strain KW20.</title>
        <authorList>
            <person name="Harrison A."/>
            <person name="Dyer D.W."/>
            <person name="Gillaspy A."/>
            <person name="Ray W.C."/>
            <person name="Mungur R."/>
            <person name="Carson M.B."/>
            <person name="Zhong H."/>
            <person name="Gipson J."/>
            <person name="Gipson M."/>
            <person name="Johnson L.S."/>
            <person name="Lewis L."/>
            <person name="Bakaletz L.O."/>
            <person name="Munson R.S. Jr."/>
        </authorList>
    </citation>
    <scope>NUCLEOTIDE SEQUENCE [LARGE SCALE GENOMIC DNA]</scope>
    <source>
        <strain>86-028NP</strain>
    </source>
</reference>
<evidence type="ECO:0000255" key="1">
    <source>
        <dbReference type="HAMAP-Rule" id="MF_01326"/>
    </source>
</evidence>
<evidence type="ECO:0000305" key="2"/>
<comment type="function">
    <text evidence="1">One of two assembly initiator proteins, it binds directly to the 5'-end of the 23S rRNA, where it nucleates assembly of the 50S subunit.</text>
</comment>
<comment type="function">
    <text evidence="1">One of the proteins that surrounds the polypeptide exit tunnel on the outside of the subunit.</text>
</comment>
<comment type="subunit">
    <text evidence="1">Part of the 50S ribosomal subunit.</text>
</comment>
<comment type="similarity">
    <text evidence="1">Belongs to the universal ribosomal protein uL24 family.</text>
</comment>
<proteinExistence type="inferred from homology"/>
<gene>
    <name evidence="1" type="primary">rplX</name>
    <name type="ordered locus">NTHI0952</name>
</gene>